<comment type="subcellular location">
    <subcellularLocation>
        <location evidence="2">Nucleus</location>
        <location evidence="2">Nucleoplasm</location>
    </subcellularLocation>
    <subcellularLocation>
        <location evidence="2">Cytoplasm</location>
        <location evidence="2">Cytoskeleton</location>
    </subcellularLocation>
    <text>Colocalizes with Su(var)205/HP1 on centric heterochromatin.</text>
</comment>
<comment type="developmental stage">
    <text evidence="1 2">Expressed both maternally and zygotically. Expressed throughout development, with highest expression observed in embryos (at protein level).</text>
</comment>
<comment type="similarity">
    <text evidence="3">Belongs to the actin family. ARP6 subfamily.</text>
</comment>
<evidence type="ECO:0000269" key="1">
    <source>
    </source>
</evidence>
<evidence type="ECO:0000269" key="2">
    <source>
    </source>
</evidence>
<evidence type="ECO:0000305" key="3"/>
<feature type="chain" id="PRO_0000089108" description="Actin-related protein 6">
    <location>
        <begin position="1"/>
        <end position="398"/>
    </location>
</feature>
<gene>
    <name type="primary">Arp6</name>
    <name type="synonym">Acrp</name>
    <name type="synonym">Actr13E</name>
    <name type="synonym">Arp4</name>
    <name type="ORF">CG11678</name>
</gene>
<organism>
    <name type="scientific">Drosophila melanogaster</name>
    <name type="common">Fruit fly</name>
    <dbReference type="NCBI Taxonomy" id="7227"/>
    <lineage>
        <taxon>Eukaryota</taxon>
        <taxon>Metazoa</taxon>
        <taxon>Ecdysozoa</taxon>
        <taxon>Arthropoda</taxon>
        <taxon>Hexapoda</taxon>
        <taxon>Insecta</taxon>
        <taxon>Pterygota</taxon>
        <taxon>Neoptera</taxon>
        <taxon>Endopterygota</taxon>
        <taxon>Diptera</taxon>
        <taxon>Brachycera</taxon>
        <taxon>Muscomorpha</taxon>
        <taxon>Ephydroidea</taxon>
        <taxon>Drosophilidae</taxon>
        <taxon>Drosophila</taxon>
        <taxon>Sophophora</taxon>
    </lineage>
</organism>
<protein>
    <recommendedName>
        <fullName>Actin-related protein 6</fullName>
        <shortName>dArp6</shortName>
    </recommendedName>
    <alternativeName>
        <fullName>Actin-like protein 13E</fullName>
    </alternativeName>
</protein>
<keyword id="KW-0963">Cytoplasm</keyword>
<keyword id="KW-0206">Cytoskeleton</keyword>
<keyword id="KW-0539">Nucleus</keyword>
<keyword id="KW-1185">Reference proteome</keyword>
<reference key="1">
    <citation type="journal article" date="1994" name="J. Mol. Biol.">
        <title>Identification of a divergent actin-related protein in Drosophila.</title>
        <authorList>
            <person name="Frankel S."/>
            <person name="Heintzelman M.B."/>
            <person name="Artavanis-Tsakonas S."/>
            <person name="Mooseker M.S."/>
        </authorList>
    </citation>
    <scope>NUCLEOTIDE SEQUENCE [MRNA]</scope>
    <scope>DEVELOPMENTAL STAGE</scope>
    <source>
        <strain>Canton-S</strain>
    </source>
</reference>
<reference key="2">
    <citation type="journal article" date="2000" name="Science">
        <title>The genome sequence of Drosophila melanogaster.</title>
        <authorList>
            <person name="Adams M.D."/>
            <person name="Celniker S.E."/>
            <person name="Holt R.A."/>
            <person name="Evans C.A."/>
            <person name="Gocayne J.D."/>
            <person name="Amanatides P.G."/>
            <person name="Scherer S.E."/>
            <person name="Li P.W."/>
            <person name="Hoskins R.A."/>
            <person name="Galle R.F."/>
            <person name="George R.A."/>
            <person name="Lewis S.E."/>
            <person name="Richards S."/>
            <person name="Ashburner M."/>
            <person name="Henderson S.N."/>
            <person name="Sutton G.G."/>
            <person name="Wortman J.R."/>
            <person name="Yandell M.D."/>
            <person name="Zhang Q."/>
            <person name="Chen L.X."/>
            <person name="Brandon R.C."/>
            <person name="Rogers Y.-H.C."/>
            <person name="Blazej R.G."/>
            <person name="Champe M."/>
            <person name="Pfeiffer B.D."/>
            <person name="Wan K.H."/>
            <person name="Doyle C."/>
            <person name="Baxter E.G."/>
            <person name="Helt G."/>
            <person name="Nelson C.R."/>
            <person name="Miklos G.L.G."/>
            <person name="Abril J.F."/>
            <person name="Agbayani A."/>
            <person name="An H.-J."/>
            <person name="Andrews-Pfannkoch C."/>
            <person name="Baldwin D."/>
            <person name="Ballew R.M."/>
            <person name="Basu A."/>
            <person name="Baxendale J."/>
            <person name="Bayraktaroglu L."/>
            <person name="Beasley E.M."/>
            <person name="Beeson K.Y."/>
            <person name="Benos P.V."/>
            <person name="Berman B.P."/>
            <person name="Bhandari D."/>
            <person name="Bolshakov S."/>
            <person name="Borkova D."/>
            <person name="Botchan M.R."/>
            <person name="Bouck J."/>
            <person name="Brokstein P."/>
            <person name="Brottier P."/>
            <person name="Burtis K.C."/>
            <person name="Busam D.A."/>
            <person name="Butler H."/>
            <person name="Cadieu E."/>
            <person name="Center A."/>
            <person name="Chandra I."/>
            <person name="Cherry J.M."/>
            <person name="Cawley S."/>
            <person name="Dahlke C."/>
            <person name="Davenport L.B."/>
            <person name="Davies P."/>
            <person name="de Pablos B."/>
            <person name="Delcher A."/>
            <person name="Deng Z."/>
            <person name="Mays A.D."/>
            <person name="Dew I."/>
            <person name="Dietz S.M."/>
            <person name="Dodson K."/>
            <person name="Doup L.E."/>
            <person name="Downes M."/>
            <person name="Dugan-Rocha S."/>
            <person name="Dunkov B.C."/>
            <person name="Dunn P."/>
            <person name="Durbin K.J."/>
            <person name="Evangelista C.C."/>
            <person name="Ferraz C."/>
            <person name="Ferriera S."/>
            <person name="Fleischmann W."/>
            <person name="Fosler C."/>
            <person name="Gabrielian A.E."/>
            <person name="Garg N.S."/>
            <person name="Gelbart W.M."/>
            <person name="Glasser K."/>
            <person name="Glodek A."/>
            <person name="Gong F."/>
            <person name="Gorrell J.H."/>
            <person name="Gu Z."/>
            <person name="Guan P."/>
            <person name="Harris M."/>
            <person name="Harris N.L."/>
            <person name="Harvey D.A."/>
            <person name="Heiman T.J."/>
            <person name="Hernandez J.R."/>
            <person name="Houck J."/>
            <person name="Hostin D."/>
            <person name="Houston K.A."/>
            <person name="Howland T.J."/>
            <person name="Wei M.-H."/>
            <person name="Ibegwam C."/>
            <person name="Jalali M."/>
            <person name="Kalush F."/>
            <person name="Karpen G.H."/>
            <person name="Ke Z."/>
            <person name="Kennison J.A."/>
            <person name="Ketchum K.A."/>
            <person name="Kimmel B.E."/>
            <person name="Kodira C.D."/>
            <person name="Kraft C.L."/>
            <person name="Kravitz S."/>
            <person name="Kulp D."/>
            <person name="Lai Z."/>
            <person name="Lasko P."/>
            <person name="Lei Y."/>
            <person name="Levitsky A.A."/>
            <person name="Li J.H."/>
            <person name="Li Z."/>
            <person name="Liang Y."/>
            <person name="Lin X."/>
            <person name="Liu X."/>
            <person name="Mattei B."/>
            <person name="McIntosh T.C."/>
            <person name="McLeod M.P."/>
            <person name="McPherson D."/>
            <person name="Merkulov G."/>
            <person name="Milshina N.V."/>
            <person name="Mobarry C."/>
            <person name="Morris J."/>
            <person name="Moshrefi A."/>
            <person name="Mount S.M."/>
            <person name="Moy M."/>
            <person name="Murphy B."/>
            <person name="Murphy L."/>
            <person name="Muzny D.M."/>
            <person name="Nelson D.L."/>
            <person name="Nelson D.R."/>
            <person name="Nelson K.A."/>
            <person name="Nixon K."/>
            <person name="Nusskern D.R."/>
            <person name="Pacleb J.M."/>
            <person name="Palazzolo M."/>
            <person name="Pittman G.S."/>
            <person name="Pan S."/>
            <person name="Pollard J."/>
            <person name="Puri V."/>
            <person name="Reese M.G."/>
            <person name="Reinert K."/>
            <person name="Remington K."/>
            <person name="Saunders R.D.C."/>
            <person name="Scheeler F."/>
            <person name="Shen H."/>
            <person name="Shue B.C."/>
            <person name="Siden-Kiamos I."/>
            <person name="Simpson M."/>
            <person name="Skupski M.P."/>
            <person name="Smith T.J."/>
            <person name="Spier E."/>
            <person name="Spradling A.C."/>
            <person name="Stapleton M."/>
            <person name="Strong R."/>
            <person name="Sun E."/>
            <person name="Svirskas R."/>
            <person name="Tector C."/>
            <person name="Turner R."/>
            <person name="Venter E."/>
            <person name="Wang A.H."/>
            <person name="Wang X."/>
            <person name="Wang Z.-Y."/>
            <person name="Wassarman D.A."/>
            <person name="Weinstock G.M."/>
            <person name="Weissenbach J."/>
            <person name="Williams S.M."/>
            <person name="Woodage T."/>
            <person name="Worley K.C."/>
            <person name="Wu D."/>
            <person name="Yang S."/>
            <person name="Yao Q.A."/>
            <person name="Ye J."/>
            <person name="Yeh R.-F."/>
            <person name="Zaveri J.S."/>
            <person name="Zhan M."/>
            <person name="Zhang G."/>
            <person name="Zhao Q."/>
            <person name="Zheng L."/>
            <person name="Zheng X.H."/>
            <person name="Zhong F.N."/>
            <person name="Zhong W."/>
            <person name="Zhou X."/>
            <person name="Zhu S.C."/>
            <person name="Zhu X."/>
            <person name="Smith H.O."/>
            <person name="Gibbs R.A."/>
            <person name="Myers E.W."/>
            <person name="Rubin G.M."/>
            <person name="Venter J.C."/>
        </authorList>
    </citation>
    <scope>NUCLEOTIDE SEQUENCE [LARGE SCALE GENOMIC DNA]</scope>
    <source>
        <strain>Berkeley</strain>
    </source>
</reference>
<reference key="3">
    <citation type="journal article" date="2002" name="Genome Biol.">
        <title>Annotation of the Drosophila melanogaster euchromatic genome: a systematic review.</title>
        <authorList>
            <person name="Misra S."/>
            <person name="Crosby M.A."/>
            <person name="Mungall C.J."/>
            <person name="Matthews B.B."/>
            <person name="Campbell K.S."/>
            <person name="Hradecky P."/>
            <person name="Huang Y."/>
            <person name="Kaminker J.S."/>
            <person name="Millburn G.H."/>
            <person name="Prochnik S.E."/>
            <person name="Smith C.D."/>
            <person name="Tupy J.L."/>
            <person name="Whitfield E.J."/>
            <person name="Bayraktaroglu L."/>
            <person name="Berman B.P."/>
            <person name="Bettencourt B.R."/>
            <person name="Celniker S.E."/>
            <person name="de Grey A.D.N.J."/>
            <person name="Drysdale R.A."/>
            <person name="Harris N.L."/>
            <person name="Richter J."/>
            <person name="Russo S."/>
            <person name="Schroeder A.J."/>
            <person name="Shu S.Q."/>
            <person name="Stapleton M."/>
            <person name="Yamada C."/>
            <person name="Ashburner M."/>
            <person name="Gelbart W.M."/>
            <person name="Rubin G.M."/>
            <person name="Lewis S.E."/>
        </authorList>
    </citation>
    <scope>GENOME REANNOTATION</scope>
    <source>
        <strain>Berkeley</strain>
    </source>
</reference>
<reference key="4">
    <citation type="journal article" date="2002" name="Genome Biol.">
        <title>A Drosophila full-length cDNA resource.</title>
        <authorList>
            <person name="Stapleton M."/>
            <person name="Carlson J.W."/>
            <person name="Brokstein P."/>
            <person name="Yu C."/>
            <person name="Champe M."/>
            <person name="George R.A."/>
            <person name="Guarin H."/>
            <person name="Kronmiller B."/>
            <person name="Pacleb J.M."/>
            <person name="Park S."/>
            <person name="Wan K.H."/>
            <person name="Rubin G.M."/>
            <person name="Celniker S.E."/>
        </authorList>
    </citation>
    <scope>NUCLEOTIDE SEQUENCE [LARGE SCALE MRNA]</scope>
    <source>
        <strain>Berkeley</strain>
        <tissue>Embryo</tissue>
    </source>
</reference>
<reference key="5">
    <citation type="journal article" date="1997" name="J. Cell Sci.">
        <title>An actin-related protein in Drosophila colocalizes with heterochromatin protein 1 in pericentric heterochromatin.</title>
        <authorList>
            <person name="Frankel S."/>
            <person name="Sigel E.A."/>
            <person name="Craig C."/>
            <person name="Elgin S.C."/>
            <person name="Mooseker M.S."/>
            <person name="Artavanis-Tsakonas S."/>
        </authorList>
    </citation>
    <scope>SUBCELLULAR LOCATION</scope>
    <scope>DEVELOPMENTAL STAGE</scope>
</reference>
<proteinExistence type="evidence at protein level"/>
<accession>P45890</accession>
<accession>Q9VXQ9</accession>
<dbReference type="EMBL" id="L25314">
    <property type="protein sequence ID" value="AAA17685.1"/>
    <property type="molecule type" value="mRNA"/>
</dbReference>
<dbReference type="EMBL" id="AE014298">
    <property type="protein sequence ID" value="AAF48499.1"/>
    <property type="molecule type" value="Genomic_DNA"/>
</dbReference>
<dbReference type="EMBL" id="AY058726">
    <property type="protein sequence ID" value="AAL13955.1"/>
    <property type="molecule type" value="mRNA"/>
</dbReference>
<dbReference type="PIR" id="S44028">
    <property type="entry name" value="S44028"/>
</dbReference>
<dbReference type="RefSeq" id="NP_511165.1">
    <property type="nucleotide sequence ID" value="NM_078610.3"/>
</dbReference>
<dbReference type="SMR" id="P45890"/>
<dbReference type="BioGRID" id="58864">
    <property type="interactions" value="23"/>
</dbReference>
<dbReference type="ComplexPortal" id="CPX-2423">
    <property type="entry name" value="SWR1 chromatin remodelling complex"/>
</dbReference>
<dbReference type="DIP" id="DIP-17460N"/>
<dbReference type="FunCoup" id="P45890">
    <property type="interactions" value="591"/>
</dbReference>
<dbReference type="IntAct" id="P45890">
    <property type="interactions" value="4"/>
</dbReference>
<dbReference type="STRING" id="7227.FBpp0073983"/>
<dbReference type="PaxDb" id="7227-FBpp0073983"/>
<dbReference type="DNASU" id="32514"/>
<dbReference type="EnsemblMetazoa" id="FBtr0074203">
    <property type="protein sequence ID" value="FBpp0073983"/>
    <property type="gene ID" value="FBgn0011741"/>
</dbReference>
<dbReference type="GeneID" id="32514"/>
<dbReference type="KEGG" id="dme:Dmel_CG11678"/>
<dbReference type="AGR" id="FB:FBgn0011741"/>
<dbReference type="CTD" id="32514"/>
<dbReference type="FlyBase" id="FBgn0011741">
    <property type="gene designation" value="Arp6"/>
</dbReference>
<dbReference type="VEuPathDB" id="VectorBase:FBgn0011741"/>
<dbReference type="eggNOG" id="KOG0680">
    <property type="taxonomic scope" value="Eukaryota"/>
</dbReference>
<dbReference type="GeneTree" id="ENSGT00720000108833"/>
<dbReference type="HOGENOM" id="CLU_027965_1_1_1"/>
<dbReference type="InParanoid" id="P45890"/>
<dbReference type="OMA" id="FFEEYEC"/>
<dbReference type="OrthoDB" id="6220758at2759"/>
<dbReference type="PhylomeDB" id="P45890"/>
<dbReference type="SignaLink" id="P45890"/>
<dbReference type="BioGRID-ORCS" id="32514">
    <property type="hits" value="1 hit in 1 CRISPR screen"/>
</dbReference>
<dbReference type="GenomeRNAi" id="32514"/>
<dbReference type="PRO" id="PR:P45890"/>
<dbReference type="Proteomes" id="UP000000803">
    <property type="component" value="Chromosome X"/>
</dbReference>
<dbReference type="Bgee" id="FBgn0011741">
    <property type="expression patterns" value="Expressed in eye disc (Drosophila) and 96 other cell types or tissues"/>
</dbReference>
<dbReference type="GO" id="GO:0000785">
    <property type="term" value="C:chromatin"/>
    <property type="evidence" value="ECO:0000314"/>
    <property type="project" value="FlyBase"/>
</dbReference>
<dbReference type="GO" id="GO:0005737">
    <property type="term" value="C:cytoplasm"/>
    <property type="evidence" value="ECO:0007669"/>
    <property type="project" value="UniProtKB-KW"/>
</dbReference>
<dbReference type="GO" id="GO:0005856">
    <property type="term" value="C:cytoskeleton"/>
    <property type="evidence" value="ECO:0007669"/>
    <property type="project" value="UniProtKB-SubCell"/>
</dbReference>
<dbReference type="GO" id="GO:0005634">
    <property type="term" value="C:nucleus"/>
    <property type="evidence" value="ECO:0000314"/>
    <property type="project" value="FlyBase"/>
</dbReference>
<dbReference type="GO" id="GO:0000812">
    <property type="term" value="C:Swr1 complex"/>
    <property type="evidence" value="ECO:0000318"/>
    <property type="project" value="GO_Central"/>
</dbReference>
<dbReference type="GO" id="GO:0003682">
    <property type="term" value="F:chromatin binding"/>
    <property type="evidence" value="ECO:0000250"/>
    <property type="project" value="FlyBase"/>
</dbReference>
<dbReference type="GO" id="GO:0031491">
    <property type="term" value="F:nucleosome binding"/>
    <property type="evidence" value="ECO:0000318"/>
    <property type="project" value="GO_Central"/>
</dbReference>
<dbReference type="GO" id="GO:0070828">
    <property type="term" value="P:heterochromatin organization"/>
    <property type="evidence" value="ECO:0000250"/>
    <property type="project" value="FlyBase"/>
</dbReference>
<dbReference type="GO" id="GO:0045815">
    <property type="term" value="P:transcription initiation-coupled chromatin remodeling"/>
    <property type="evidence" value="ECO:0000315"/>
    <property type="project" value="FlyBase"/>
</dbReference>
<dbReference type="CDD" id="cd10210">
    <property type="entry name" value="ASKHA_NBD_Arp6"/>
    <property type="match status" value="1"/>
</dbReference>
<dbReference type="FunFam" id="2.30.36.70:FF:000003">
    <property type="entry name" value="Actin-related protein 6"/>
    <property type="match status" value="1"/>
</dbReference>
<dbReference type="FunFam" id="3.90.640.10:FF:000014">
    <property type="entry name" value="Putative actin-related protein 6"/>
    <property type="match status" value="1"/>
</dbReference>
<dbReference type="Gene3D" id="3.30.420.40">
    <property type="match status" value="2"/>
</dbReference>
<dbReference type="Gene3D" id="2.30.36.70">
    <property type="entry name" value="Actin, Chain A, domain 2"/>
    <property type="match status" value="1"/>
</dbReference>
<dbReference type="Gene3D" id="3.90.640.10">
    <property type="entry name" value="Actin, Chain A, domain 4"/>
    <property type="match status" value="1"/>
</dbReference>
<dbReference type="InterPro" id="IPR004000">
    <property type="entry name" value="Actin"/>
</dbReference>
<dbReference type="InterPro" id="IPR043129">
    <property type="entry name" value="ATPase_NBD"/>
</dbReference>
<dbReference type="PANTHER" id="PTHR11937">
    <property type="entry name" value="ACTIN"/>
    <property type="match status" value="1"/>
</dbReference>
<dbReference type="Pfam" id="PF00022">
    <property type="entry name" value="Actin"/>
    <property type="match status" value="1"/>
</dbReference>
<dbReference type="SMART" id="SM00268">
    <property type="entry name" value="ACTIN"/>
    <property type="match status" value="1"/>
</dbReference>
<dbReference type="SUPFAM" id="SSF53067">
    <property type="entry name" value="Actin-like ATPase domain"/>
    <property type="match status" value="2"/>
</dbReference>
<name>ARP6_DROME</name>
<sequence>MANAVVVLDNGAHTAKVGLANQDEPHVVPNCIMKAKSERRRAFVGNQIDECRDTSALYYILAFQRGYLLNWHTQKTVWDYIFSKDGIGCSLENRNIVITEPQMNFQSIQEATLEILFEEYKVDGVYKTTAADLAAFNYVADSEERTTMESLNCIIIDVGYSFTHVVPFVLGRRVLQGIRRIDMGGKALTNQLKELISYRHLNVMDESHVVNQIKEDVCFVAEDFKQAMQVHYSEEKRREVTVDYVLPDFTTVKRGYVRVPGKPREDEEQQQMVSLCNERFTVPELLFNPSDIGVQQVGIPEAVADCLKACPWEAHRELLLNILIVGGSAQFPGFLPRLKRDLRALVPDDLEVSLICPEDPVRYAWYGGKEVATSPNFEEFVYTQDDYEEYGFQGINQR</sequence>